<gene>
    <name type="primary">rplJ</name>
    <name type="ordered locus">HP_1200</name>
</gene>
<feature type="chain" id="PRO_0000154641" description="Large ribosomal subunit protein uL10">
    <location>
        <begin position="1"/>
        <end position="164"/>
    </location>
</feature>
<reference key="1">
    <citation type="journal article" date="1997" name="Nature">
        <title>The complete genome sequence of the gastric pathogen Helicobacter pylori.</title>
        <authorList>
            <person name="Tomb J.-F."/>
            <person name="White O."/>
            <person name="Kerlavage A.R."/>
            <person name="Clayton R.A."/>
            <person name="Sutton G.G."/>
            <person name="Fleischmann R.D."/>
            <person name="Ketchum K.A."/>
            <person name="Klenk H.-P."/>
            <person name="Gill S.R."/>
            <person name="Dougherty B.A."/>
            <person name="Nelson K.E."/>
            <person name="Quackenbush J."/>
            <person name="Zhou L."/>
            <person name="Kirkness E.F."/>
            <person name="Peterson S.N."/>
            <person name="Loftus B.J."/>
            <person name="Richardson D.L."/>
            <person name="Dodson R.J."/>
            <person name="Khalak H.G."/>
            <person name="Glodek A."/>
            <person name="McKenney K."/>
            <person name="FitzGerald L.M."/>
            <person name="Lee N."/>
            <person name="Adams M.D."/>
            <person name="Hickey E.K."/>
            <person name="Berg D.E."/>
            <person name="Gocayne J.D."/>
            <person name="Utterback T.R."/>
            <person name="Peterson J.D."/>
            <person name="Kelley J.M."/>
            <person name="Cotton M.D."/>
            <person name="Weidman J.F."/>
            <person name="Fujii C."/>
            <person name="Bowman C."/>
            <person name="Watthey L."/>
            <person name="Wallin E."/>
            <person name="Hayes W.S."/>
            <person name="Borodovsky M."/>
            <person name="Karp P.D."/>
            <person name="Smith H.O."/>
            <person name="Fraser C.M."/>
            <person name="Venter J.C."/>
        </authorList>
    </citation>
    <scope>NUCLEOTIDE SEQUENCE [LARGE SCALE GENOMIC DNA]</scope>
    <source>
        <strain>ATCC 700392 / 26695</strain>
    </source>
</reference>
<protein>
    <recommendedName>
        <fullName evidence="2">Large ribosomal subunit protein uL10</fullName>
    </recommendedName>
    <alternativeName>
        <fullName>50S ribosomal protein L10</fullName>
    </alternativeName>
</protein>
<proteinExistence type="evidence at protein level"/>
<dbReference type="EMBL" id="AE000511">
    <property type="protein sequence ID" value="AAD08246.1"/>
    <property type="molecule type" value="Genomic_DNA"/>
</dbReference>
<dbReference type="PIR" id="H64669">
    <property type="entry name" value="H64669"/>
</dbReference>
<dbReference type="RefSeq" id="NP_207991.1">
    <property type="nucleotide sequence ID" value="NC_000915.1"/>
</dbReference>
<dbReference type="RefSeq" id="WP_001171739.1">
    <property type="nucleotide sequence ID" value="NC_018939.1"/>
</dbReference>
<dbReference type="SMR" id="P56036"/>
<dbReference type="DIP" id="DIP-3052N"/>
<dbReference type="FunCoup" id="P56036">
    <property type="interactions" value="411"/>
</dbReference>
<dbReference type="IntAct" id="P56036">
    <property type="interactions" value="4"/>
</dbReference>
<dbReference type="MINT" id="P56036"/>
<dbReference type="STRING" id="85962.HP_1200"/>
<dbReference type="PaxDb" id="85962-C694_06210"/>
<dbReference type="EnsemblBacteria" id="AAD08246">
    <property type="protein sequence ID" value="AAD08246"/>
    <property type="gene ID" value="HP_1200"/>
</dbReference>
<dbReference type="KEGG" id="heo:C694_06210"/>
<dbReference type="KEGG" id="hpy:HP_1200"/>
<dbReference type="PATRIC" id="fig|85962.47.peg.1290"/>
<dbReference type="eggNOG" id="COG0244">
    <property type="taxonomic scope" value="Bacteria"/>
</dbReference>
<dbReference type="InParanoid" id="P56036"/>
<dbReference type="OrthoDB" id="3186107at2"/>
<dbReference type="PhylomeDB" id="P56036"/>
<dbReference type="Proteomes" id="UP000000429">
    <property type="component" value="Chromosome"/>
</dbReference>
<dbReference type="GO" id="GO:0022625">
    <property type="term" value="C:cytosolic large ribosomal subunit"/>
    <property type="evidence" value="ECO:0000318"/>
    <property type="project" value="GO_Central"/>
</dbReference>
<dbReference type="GO" id="GO:0070180">
    <property type="term" value="F:large ribosomal subunit rRNA binding"/>
    <property type="evidence" value="ECO:0007669"/>
    <property type="project" value="UniProtKB-UniRule"/>
</dbReference>
<dbReference type="GO" id="GO:0003735">
    <property type="term" value="F:structural constituent of ribosome"/>
    <property type="evidence" value="ECO:0000318"/>
    <property type="project" value="GO_Central"/>
</dbReference>
<dbReference type="GO" id="GO:0006412">
    <property type="term" value="P:translation"/>
    <property type="evidence" value="ECO:0000318"/>
    <property type="project" value="GO_Central"/>
</dbReference>
<dbReference type="CDD" id="cd05797">
    <property type="entry name" value="Ribosomal_L10"/>
    <property type="match status" value="1"/>
</dbReference>
<dbReference type="FunFam" id="3.30.70.1730:FF:000009">
    <property type="entry name" value="50S ribosomal protein L10"/>
    <property type="match status" value="1"/>
</dbReference>
<dbReference type="Gene3D" id="3.30.70.1730">
    <property type="match status" value="1"/>
</dbReference>
<dbReference type="HAMAP" id="MF_00362">
    <property type="entry name" value="Ribosomal_uL10"/>
    <property type="match status" value="1"/>
</dbReference>
<dbReference type="InterPro" id="IPR001790">
    <property type="entry name" value="Ribosomal_uL10"/>
</dbReference>
<dbReference type="InterPro" id="IPR043141">
    <property type="entry name" value="Ribosomal_uL10-like_sf"/>
</dbReference>
<dbReference type="InterPro" id="IPR022973">
    <property type="entry name" value="Ribosomal_uL10_bac"/>
</dbReference>
<dbReference type="InterPro" id="IPR047865">
    <property type="entry name" value="Ribosomal_uL10_bac_type"/>
</dbReference>
<dbReference type="InterPro" id="IPR002363">
    <property type="entry name" value="Ribosomal_uL10_CS_bac"/>
</dbReference>
<dbReference type="NCBIfam" id="NF000955">
    <property type="entry name" value="PRK00099.1-1"/>
    <property type="match status" value="1"/>
</dbReference>
<dbReference type="PANTHER" id="PTHR11560">
    <property type="entry name" value="39S RIBOSOMAL PROTEIN L10, MITOCHONDRIAL"/>
    <property type="match status" value="1"/>
</dbReference>
<dbReference type="Pfam" id="PF00466">
    <property type="entry name" value="Ribosomal_L10"/>
    <property type="match status" value="1"/>
</dbReference>
<dbReference type="SUPFAM" id="SSF160369">
    <property type="entry name" value="Ribosomal protein L10-like"/>
    <property type="match status" value="1"/>
</dbReference>
<dbReference type="PROSITE" id="PS01109">
    <property type="entry name" value="RIBOSOMAL_L10"/>
    <property type="match status" value="1"/>
</dbReference>
<sequence>MQKQHQRQHKVELVANLKSQFADAKALLICDYKGLSVRKLEALRNKARNQGIKVQVIKNTLAHIAMKETGYSDLDLKETNVFLWGGDQIALSKLVFDFQKEHKDHFVLKAGLFDKESVSVAHVEAVSKLPSKEELMGMLLSVWTAPARYFVTGLDNLRKAKEEN</sequence>
<organism>
    <name type="scientific">Helicobacter pylori (strain ATCC 700392 / 26695)</name>
    <name type="common">Campylobacter pylori</name>
    <dbReference type="NCBI Taxonomy" id="85962"/>
    <lineage>
        <taxon>Bacteria</taxon>
        <taxon>Pseudomonadati</taxon>
        <taxon>Campylobacterota</taxon>
        <taxon>Epsilonproteobacteria</taxon>
        <taxon>Campylobacterales</taxon>
        <taxon>Helicobacteraceae</taxon>
        <taxon>Helicobacter</taxon>
    </lineage>
</organism>
<accession>P56036</accession>
<name>RL10_HELPY</name>
<evidence type="ECO:0000250" key="1"/>
<evidence type="ECO:0000305" key="2"/>
<comment type="function">
    <text evidence="1">Forms part of the ribosomal stalk, playing a central role in the interaction of the ribosome with GTP-bound translation factors.</text>
</comment>
<comment type="subunit">
    <text evidence="1">Part of the ribosomal stalk of the 50S ribosomal subunit. The N-terminus interacts with L11 and the large rRNA to form the base of the stalk. The C-terminus forms an elongated spine to which L12 dimers bind in a sequential fashion forming a multimeric L10(L12)X complex (By similarity).</text>
</comment>
<comment type="interaction">
    <interactant intactId="EBI-7694828">
        <id>P56036</id>
    </interactant>
    <interactant intactId="EBI-7696366">
        <id>P55834</id>
        <label>rplL</label>
    </interactant>
    <organismsDiffer>false</organismsDiffer>
    <experiments>3</experiments>
</comment>
<comment type="similarity">
    <text evidence="2">Belongs to the universal ribosomal protein uL10 family.</text>
</comment>
<keyword id="KW-1185">Reference proteome</keyword>
<keyword id="KW-0687">Ribonucleoprotein</keyword>
<keyword id="KW-0689">Ribosomal protein</keyword>
<keyword id="KW-0694">RNA-binding</keyword>
<keyword id="KW-0699">rRNA-binding</keyword>